<accession>Q8DCC2</accession>
<keyword id="KW-0378">Hydrolase</keyword>
<gene>
    <name evidence="1" type="primary">glsA</name>
    <name type="ordered locus">VV1_1517</name>
</gene>
<sequence length="306" mass="33169">MKPTKELLNEILHEVRPLIGRGKVANYIPALARVPAHKLAIAVYTNQGEVIKAGDADEAFSIQSISKALSLTLAMGLYQPDEIWRRVGKEPSGQAFNSLIQLEMEQGIPRNPFINAGAIVVADLLASRLSAPRQRLLEFVRQLSGETHICYDKVVAASEMMHSDRNAAIAYLMRSFGNFENEVIPVLNNYFHACALKMSCVDLAKTFSYLANKGVSVHTDQRVISPVQTKQLNALLATCGLYDGAGEFAYRVGMPGKSGVGGGIIAIVPGEMTIAVWSPELDPSGNSLAGTKALELLSERIGRSIF</sequence>
<name>GLSA_VIBVU</name>
<feature type="chain" id="PRO_0000110631" description="Glutaminase">
    <location>
        <begin position="1"/>
        <end position="306"/>
    </location>
</feature>
<feature type="binding site" evidence="1">
    <location>
        <position position="64"/>
    </location>
    <ligand>
        <name>substrate</name>
    </ligand>
</feature>
<feature type="binding site" evidence="1">
    <location>
        <position position="115"/>
    </location>
    <ligand>
        <name>substrate</name>
    </ligand>
</feature>
<feature type="binding site" evidence="1">
    <location>
        <position position="159"/>
    </location>
    <ligand>
        <name>substrate</name>
    </ligand>
</feature>
<feature type="binding site" evidence="1">
    <location>
        <position position="166"/>
    </location>
    <ligand>
        <name>substrate</name>
    </ligand>
</feature>
<feature type="binding site" evidence="1">
    <location>
        <position position="190"/>
    </location>
    <ligand>
        <name>substrate</name>
    </ligand>
</feature>
<feature type="binding site" evidence="1">
    <location>
        <position position="242"/>
    </location>
    <ligand>
        <name>substrate</name>
    </ligand>
</feature>
<feature type="binding site" evidence="1">
    <location>
        <position position="260"/>
    </location>
    <ligand>
        <name>substrate</name>
    </ligand>
</feature>
<organism>
    <name type="scientific">Vibrio vulnificus (strain CMCP6)</name>
    <dbReference type="NCBI Taxonomy" id="216895"/>
    <lineage>
        <taxon>Bacteria</taxon>
        <taxon>Pseudomonadati</taxon>
        <taxon>Pseudomonadota</taxon>
        <taxon>Gammaproteobacteria</taxon>
        <taxon>Vibrionales</taxon>
        <taxon>Vibrionaceae</taxon>
        <taxon>Vibrio</taxon>
    </lineage>
</organism>
<reference key="1">
    <citation type="submission" date="2002-12" db="EMBL/GenBank/DDBJ databases">
        <title>Complete genome sequence of Vibrio vulnificus CMCP6.</title>
        <authorList>
            <person name="Rhee J.H."/>
            <person name="Kim S.Y."/>
            <person name="Chung S.S."/>
            <person name="Kim J.J."/>
            <person name="Moon Y.H."/>
            <person name="Jeong H."/>
            <person name="Choy H.E."/>
        </authorList>
    </citation>
    <scope>NUCLEOTIDE SEQUENCE [LARGE SCALE GENOMIC DNA]</scope>
    <source>
        <strain>CMCP6</strain>
    </source>
</reference>
<protein>
    <recommendedName>
        <fullName evidence="1">Glutaminase</fullName>
        <ecNumber evidence="1">3.5.1.2</ecNumber>
    </recommendedName>
</protein>
<dbReference type="EC" id="3.5.1.2" evidence="1"/>
<dbReference type="EMBL" id="AE016795">
    <property type="protein sequence ID" value="AAO09943.1"/>
    <property type="molecule type" value="Genomic_DNA"/>
</dbReference>
<dbReference type="SMR" id="Q8DCC2"/>
<dbReference type="KEGG" id="vvu:VV1_1517"/>
<dbReference type="HOGENOM" id="CLU_027932_1_1_6"/>
<dbReference type="Proteomes" id="UP000002275">
    <property type="component" value="Chromosome 1"/>
</dbReference>
<dbReference type="GO" id="GO:0004359">
    <property type="term" value="F:glutaminase activity"/>
    <property type="evidence" value="ECO:0007669"/>
    <property type="project" value="UniProtKB-UniRule"/>
</dbReference>
<dbReference type="GO" id="GO:0006537">
    <property type="term" value="P:glutamate biosynthetic process"/>
    <property type="evidence" value="ECO:0007669"/>
    <property type="project" value="TreeGrafter"/>
</dbReference>
<dbReference type="GO" id="GO:0006543">
    <property type="term" value="P:glutamine catabolic process"/>
    <property type="evidence" value="ECO:0007669"/>
    <property type="project" value="TreeGrafter"/>
</dbReference>
<dbReference type="FunFam" id="3.40.710.10:FF:000005">
    <property type="entry name" value="Glutaminase"/>
    <property type="match status" value="1"/>
</dbReference>
<dbReference type="Gene3D" id="3.40.710.10">
    <property type="entry name" value="DD-peptidase/beta-lactamase superfamily"/>
    <property type="match status" value="1"/>
</dbReference>
<dbReference type="HAMAP" id="MF_00313">
    <property type="entry name" value="Glutaminase"/>
    <property type="match status" value="1"/>
</dbReference>
<dbReference type="InterPro" id="IPR012338">
    <property type="entry name" value="Beta-lactam/transpept-like"/>
</dbReference>
<dbReference type="InterPro" id="IPR015868">
    <property type="entry name" value="Glutaminase"/>
</dbReference>
<dbReference type="NCBIfam" id="TIGR03814">
    <property type="entry name" value="Gln_ase"/>
    <property type="match status" value="1"/>
</dbReference>
<dbReference type="NCBIfam" id="NF002132">
    <property type="entry name" value="PRK00971.1-1"/>
    <property type="match status" value="1"/>
</dbReference>
<dbReference type="NCBIfam" id="NF002133">
    <property type="entry name" value="PRK00971.1-2"/>
    <property type="match status" value="1"/>
</dbReference>
<dbReference type="PANTHER" id="PTHR12544">
    <property type="entry name" value="GLUTAMINASE"/>
    <property type="match status" value="1"/>
</dbReference>
<dbReference type="PANTHER" id="PTHR12544:SF29">
    <property type="entry name" value="GLUTAMINASE"/>
    <property type="match status" value="1"/>
</dbReference>
<dbReference type="Pfam" id="PF04960">
    <property type="entry name" value="Glutaminase"/>
    <property type="match status" value="1"/>
</dbReference>
<dbReference type="SUPFAM" id="SSF56601">
    <property type="entry name" value="beta-lactamase/transpeptidase-like"/>
    <property type="match status" value="1"/>
</dbReference>
<comment type="catalytic activity">
    <reaction evidence="1">
        <text>L-glutamine + H2O = L-glutamate + NH4(+)</text>
        <dbReference type="Rhea" id="RHEA:15889"/>
        <dbReference type="ChEBI" id="CHEBI:15377"/>
        <dbReference type="ChEBI" id="CHEBI:28938"/>
        <dbReference type="ChEBI" id="CHEBI:29985"/>
        <dbReference type="ChEBI" id="CHEBI:58359"/>
        <dbReference type="EC" id="3.5.1.2"/>
    </reaction>
</comment>
<comment type="subunit">
    <text evidence="1">Homotetramer.</text>
</comment>
<comment type="similarity">
    <text evidence="1">Belongs to the glutaminase family.</text>
</comment>
<evidence type="ECO:0000255" key="1">
    <source>
        <dbReference type="HAMAP-Rule" id="MF_00313"/>
    </source>
</evidence>
<proteinExistence type="inferred from homology"/>